<organism>
    <name type="scientific">Arabidopsis thaliana</name>
    <name type="common">Mouse-ear cress</name>
    <dbReference type="NCBI Taxonomy" id="3702"/>
    <lineage>
        <taxon>Eukaryota</taxon>
        <taxon>Viridiplantae</taxon>
        <taxon>Streptophyta</taxon>
        <taxon>Embryophyta</taxon>
        <taxon>Tracheophyta</taxon>
        <taxon>Spermatophyta</taxon>
        <taxon>Magnoliopsida</taxon>
        <taxon>eudicotyledons</taxon>
        <taxon>Gunneridae</taxon>
        <taxon>Pentapetalae</taxon>
        <taxon>rosids</taxon>
        <taxon>malvids</taxon>
        <taxon>Brassicales</taxon>
        <taxon>Brassicaceae</taxon>
        <taxon>Camelineae</taxon>
        <taxon>Arabidopsis</taxon>
    </lineage>
</organism>
<comment type="function">
    <text evidence="1 2 3 4 5">Involved in the detoxification of reactive carbonyls (PubMed:10848984, PubMed:12514241, PubMed:16299173). Acts on lipid peroxide-derived reactive aldehydes (PubMed:12514241). Specific to a double bond activated by an adjacent carbonyl group (PubMed:12514241). Can use both quinones and diamide as substrates, but not menadione, ferricyanide or phylloquinone (PubMed:10848984). Can use 4-hydroxy-(2E)-nonenal (HNE), 4-hydroxy-(2E)-hexenal (HHE), (2E)-nonenal, (2E)-hexenal, (2E)-pentenal, propenal (acrolein), 3-buten-2-one and 3-penten-2-one, but not (R)-(-)-carvone, n-nonanal, n-hexanal, (3Z)-hexanal, cyclohex-2-en-1-one or 12-oxo phytodienoic acid (OPDA) as electron acceptors (PubMed:12514241). Catalyzes the reduction of the alpha,beta-unsaturated bond of 2-alkenals, of lipid peroxide-derived oxenes 9-oxo-10(E),12(Z)-octadecadienoic acid (9-KODE) and 13-oxo-9(Z),11(E)-octadecadienoic acid (13-KODE), as well as 4-oxo-(2E)-nonenal and 4-hydroxynonenal (PubMed:16299173). Can use 12-oxo-10(E) dodecanoate (traumatin), trans-1,3 diphenyl-2-propenone, trans-1,4-diphenyl-2-butene-1,4-dione, 9-oxo-12,13-epoxy-(10E)-octadecenoic acid (trans-EKODE-1b) and 9,13-dihydroxy-10-oxo-11-octadecenoic acid as substrates (PubMed:26678323). Catalyzes the reduction of the 7-8 double bond of phenylpropanal substrates, such as p-coumaryl aldehyde and coniferyl aldehyde (in vitro) (PubMed:17028190). Has activity towards toxic substrates, such as 4-hydroxy-(2E)-nonenal (in vitro) (PubMed:17028190). May play a distinct role in plant antioxidant defense and is possibly involved in NAD(P)/NAD(P)H homeostasis (PubMed:17028190).</text>
</comment>
<comment type="catalytic activity">
    <reaction evidence="2 3 4 5">
        <text>an n-alkanal + NAD(+) = an alk-2-enal + NADH + H(+)</text>
        <dbReference type="Rhea" id="RHEA:13733"/>
        <dbReference type="ChEBI" id="CHEBI:12834"/>
        <dbReference type="ChEBI" id="CHEBI:13757"/>
        <dbReference type="ChEBI" id="CHEBI:15378"/>
        <dbReference type="ChEBI" id="CHEBI:57540"/>
        <dbReference type="ChEBI" id="CHEBI:57945"/>
        <dbReference type="EC" id="1.3.1.74"/>
    </reaction>
</comment>
<comment type="catalytic activity">
    <reaction evidence="2 3 4 5">
        <text>an n-alkanal + NADP(+) = an alk-2-enal + NADPH + H(+)</text>
        <dbReference type="Rhea" id="RHEA:13737"/>
        <dbReference type="ChEBI" id="CHEBI:12834"/>
        <dbReference type="ChEBI" id="CHEBI:13757"/>
        <dbReference type="ChEBI" id="CHEBI:15378"/>
        <dbReference type="ChEBI" id="CHEBI:57783"/>
        <dbReference type="ChEBI" id="CHEBI:58349"/>
        <dbReference type="EC" id="1.3.1.74"/>
    </reaction>
</comment>
<comment type="activity regulation">
    <text evidence="1">Inhibited by N-ethylmaleimide and p-chloromercuribenzoic acid.</text>
</comment>
<comment type="biophysicochemical properties">
    <kinetics>
        <KM evidence="4">0.53 mM for p-coumaryl aldehyde</KM>
        <KM evidence="4">0.41 mM for coniferyl aldehyde</KM>
        <KM evidence="4">0.28 mM for 4-hydroxy-(2E)-nonenal</KM>
        <KM evidence="5">10 uM for trans-1,3 diphenyl-2-propenone</KM>
        <KM evidence="5">3.7 uM for trans-1,4-diphenyl-2-butene-1,4-dione</KM>
        <KM evidence="5">6.6 uM for traumatin</KM>
        <KM evidence="1">0.65 uM for 9,10-phenanthrenequinone</KM>
        <KM evidence="1">11 uM for 5-Hydroxy-1,4-naphtoquinone</KM>
        <KM evidence="1">152 uM for 1,4-Benzoquinone</KM>
        <KM evidence="1">25 uM for decyl-plastoquinone</KM>
        <KM evidence="1">20 uM for ferricytochrome c</KM>
        <KM evidence="1">128 uM for azodicarboxylic acid bis[dimethylamide]</KM>
        <KM evidence="1">120 uM for 1,10-(azocarbonyl)-dipeperidine</KM>
        <KM evidence="1">3.4 uM for azocarbonamide</KM>
        <KM evidence="1">2.5 uM for NADPH for 9,10-phenanthrenequinone-reduction</KM>
        <KM evidence="1">8.2 uM for NADPH for azodicarboxylic acid bis[dimethylamide]-reduction</KM>
        <KM evidence="2">13.4 uM for 4-hydroxy-(2E)-nonenal</KM>
        <KM evidence="2">145 uM for 4-hydroxy-(2E)-hexenal</KM>
        <KM evidence="2">5.9 uM for (2E)-nonenal</KM>
        <KM evidence="2">232 uM for (2E)-hexenal</KM>
        <KM evidence="2">1420 uM for (2E)-pentenal</KM>
        <KM evidence="2">4650 uM for propenal</KM>
        <KM evidence="2">55 uM for 3-buten-2-one</KM>
        <KM evidence="2">5.2 uM for 3-penten-2-one</KM>
        <KM evidence="3">11.3 uM for (2E),(6Z)-nonadienal</KM>
        <KM evidence="3">1.24 uM for 4-oxo-(2E)-nonenal</KM>
        <KM evidence="3">10 uM for 9-oxo-10(E),12(Z)-octadecadienoic acid</KM>
        <KM evidence="3">3.92 uM for 13-oxo-9(Z),11(E)-octadecadienoic acid</KM>
        <KM evidence="3">0.673 uM for 3-nonen-2-one</KM>
        <text evidence="1 2 3 5">kcat is 3.8 sec(-1) for trans-1,3 diphenyl-2-propenone. kcat is 4.9 sec(-1) for trans-1,4-diphenyl-2-butene-1,4-dione. kcat is 10 sec(-1) for traumatin (PubMed:26678323). kcat is 98 sec(-1) for 9,10-phenanthrenequinone. kcat is 1.9 sec(-1) for 5-Hydroxy-1,4-naphtoquinone. kcat is 12 sec(-1) for 1,4-Benzoquinone. kcat is 0.10 sec(-1) for decyl-plastoquinone. kcat is 0.03 sec(-1) for ferricytochrome c. kcat is 95 sec(-1) for azodicarboxylic acid bis[dimethylamide]. kcat is 42 sec(-1) for 1,10-(azocarbonyl)-dipeperidine. kcat is 31 sec(-1) for azocarbonamide (PubMed:10848984). kcat is 88 sec(-1) for 4-hydroxy-(2E)-nonenal. kcat is 42 sec(-1) for 4-hydroxy-(2E)-hexenal. kcat is 51 sec(-1) for (2E)-nonenal. kcat is 63 sec(-1) for (2E)-hexenal. kcat is 35 sec(-1) for (2E)-pentenal. kcat is 40 sec(-1) for propenal. kcat is 83 sec(-1) for 3-buten-2-one. kcat is 103 sec(-1) for 3-penten-2-one (PubMed:12514241). kcat is 33.9 sec(-1) for (2E),(6Z)-nonadienal. kcat is 20.1 sec(-1) for 4-oxo-(2E)-nonenal. kcat is 0.94 sec(-1) for 9-oxo-10(E),12(Z)-octadecadienoic acid. kcat is 1.10 sec(-1) for 13-oxo-9(Z),11(E)-octadecadienoic acid. kcat is 18.9 sec(-1) for 3-nonen-2-one (PubMed:16299173).</text>
    </kinetics>
    <phDependence>
        <text evidence="1 2">Optimum pH is 8.0 for 9,10-phenanthrenequinone-reduction. Optimum pH is 6.5-7.0 for azodicarboxylic acid bis[dimethylamide]-reduction (PubMed:10848984). Optimum pH is 6.0 with (2E)-hexenal or 4-hydroxy-(2E)-nonenal as substrate (PubMed:12514241).</text>
    </phDependence>
</comment>
<comment type="subunit">
    <text evidence="1 4">Homodimer.</text>
</comment>
<comment type="subcellular location">
    <subcellularLocation>
        <location evidence="3">Cytoplasm</location>
    </subcellularLocation>
    <subcellularLocation>
        <location evidence="3">Nucleus</location>
        <location evidence="3">Nucleoplasm</location>
    </subcellularLocation>
</comment>
<comment type="tissue specificity">
    <text evidence="3">Expressed in leaves.</text>
</comment>
<comment type="induction">
    <text evidence="6">Up-regulated upon treatment with paraquat, t-butylhydroperoxide, diamide, and menadione.</text>
</comment>
<comment type="similarity">
    <text evidence="12">Belongs to the NADP-dependent oxidoreductase L4BD family.</text>
</comment>
<reference key="1">
    <citation type="journal article" date="1995" name="J. Biol. Chem.">
        <title>Arabidopsis thaliana NADPH oxidoreductase homologs confer tolerance of yeasts toward the thiol-oxidizing drug diamide.</title>
        <authorList>
            <person name="Babiychuk E."/>
            <person name="Kushnir S."/>
            <person name="Belles-Boix E."/>
            <person name="van Montagu M."/>
            <person name="Inze D."/>
        </authorList>
    </citation>
    <scope>NUCLEOTIDE SEQUENCE [MRNA]</scope>
    <scope>INDUCTION BY OXIDATIVE STRESS</scope>
    <source>
        <strain>cv. Columbia</strain>
    </source>
</reference>
<reference key="2">
    <citation type="journal article" date="2000" name="Nature">
        <title>Sequence and analysis of chromosome 5 of the plant Arabidopsis thaliana.</title>
        <authorList>
            <person name="Tabata S."/>
            <person name="Kaneko T."/>
            <person name="Nakamura Y."/>
            <person name="Kotani H."/>
            <person name="Kato T."/>
            <person name="Asamizu E."/>
            <person name="Miyajima N."/>
            <person name="Sasamoto S."/>
            <person name="Kimura T."/>
            <person name="Hosouchi T."/>
            <person name="Kawashima K."/>
            <person name="Kohara M."/>
            <person name="Matsumoto M."/>
            <person name="Matsuno A."/>
            <person name="Muraki A."/>
            <person name="Nakayama S."/>
            <person name="Nakazaki N."/>
            <person name="Naruo K."/>
            <person name="Okumura S."/>
            <person name="Shinpo S."/>
            <person name="Takeuchi C."/>
            <person name="Wada T."/>
            <person name="Watanabe A."/>
            <person name="Yamada M."/>
            <person name="Yasuda M."/>
            <person name="Sato S."/>
            <person name="de la Bastide M."/>
            <person name="Huang E."/>
            <person name="Spiegel L."/>
            <person name="Gnoj L."/>
            <person name="O'Shaughnessy A."/>
            <person name="Preston R."/>
            <person name="Habermann K."/>
            <person name="Murray J."/>
            <person name="Johnson D."/>
            <person name="Rohlfing T."/>
            <person name="Nelson J."/>
            <person name="Stoneking T."/>
            <person name="Pepin K."/>
            <person name="Spieth J."/>
            <person name="Sekhon M."/>
            <person name="Armstrong J."/>
            <person name="Becker M."/>
            <person name="Belter E."/>
            <person name="Cordum H."/>
            <person name="Cordes M."/>
            <person name="Courtney L."/>
            <person name="Courtney W."/>
            <person name="Dante M."/>
            <person name="Du H."/>
            <person name="Edwards J."/>
            <person name="Fryman J."/>
            <person name="Haakensen B."/>
            <person name="Lamar E."/>
            <person name="Latreille P."/>
            <person name="Leonard S."/>
            <person name="Meyer R."/>
            <person name="Mulvaney E."/>
            <person name="Ozersky P."/>
            <person name="Riley A."/>
            <person name="Strowmatt C."/>
            <person name="Wagner-McPherson C."/>
            <person name="Wollam A."/>
            <person name="Yoakum M."/>
            <person name="Bell M."/>
            <person name="Dedhia N."/>
            <person name="Parnell L."/>
            <person name="Shah R."/>
            <person name="Rodriguez M."/>
            <person name="Hoon See L."/>
            <person name="Vil D."/>
            <person name="Baker J."/>
            <person name="Kirchoff K."/>
            <person name="Toth K."/>
            <person name="King L."/>
            <person name="Bahret A."/>
            <person name="Miller B."/>
            <person name="Marra M.A."/>
            <person name="Martienssen R."/>
            <person name="McCombie W.R."/>
            <person name="Wilson R.K."/>
            <person name="Murphy G."/>
            <person name="Bancroft I."/>
            <person name="Volckaert G."/>
            <person name="Wambutt R."/>
            <person name="Duesterhoeft A."/>
            <person name="Stiekema W."/>
            <person name="Pohl T."/>
            <person name="Entian K.-D."/>
            <person name="Terryn N."/>
            <person name="Hartley N."/>
            <person name="Bent E."/>
            <person name="Johnson S."/>
            <person name="Langham S.-A."/>
            <person name="McCullagh B."/>
            <person name="Robben J."/>
            <person name="Grymonprez B."/>
            <person name="Zimmermann W."/>
            <person name="Ramsperger U."/>
            <person name="Wedler H."/>
            <person name="Balke K."/>
            <person name="Wedler E."/>
            <person name="Peters S."/>
            <person name="van Staveren M."/>
            <person name="Dirkse W."/>
            <person name="Mooijman P."/>
            <person name="Klein Lankhorst R."/>
            <person name="Weitzenegger T."/>
            <person name="Bothe G."/>
            <person name="Rose M."/>
            <person name="Hauf J."/>
            <person name="Berneiser S."/>
            <person name="Hempel S."/>
            <person name="Feldpausch M."/>
            <person name="Lamberth S."/>
            <person name="Villarroel R."/>
            <person name="Gielen J."/>
            <person name="Ardiles W."/>
            <person name="Bents O."/>
            <person name="Lemcke K."/>
            <person name="Kolesov G."/>
            <person name="Mayer K.F.X."/>
            <person name="Rudd S."/>
            <person name="Schoof H."/>
            <person name="Schueller C."/>
            <person name="Zaccaria P."/>
            <person name="Mewes H.-W."/>
            <person name="Bevan M."/>
            <person name="Fransz P.F."/>
        </authorList>
    </citation>
    <scope>NUCLEOTIDE SEQUENCE [LARGE SCALE GENOMIC DNA]</scope>
    <source>
        <strain>cv. Columbia</strain>
    </source>
</reference>
<reference key="3">
    <citation type="journal article" date="2017" name="Plant J.">
        <title>Araport11: a complete reannotation of the Arabidopsis thaliana reference genome.</title>
        <authorList>
            <person name="Cheng C.Y."/>
            <person name="Krishnakumar V."/>
            <person name="Chan A.P."/>
            <person name="Thibaud-Nissen F."/>
            <person name="Schobel S."/>
            <person name="Town C.D."/>
        </authorList>
    </citation>
    <scope>GENOME REANNOTATION</scope>
    <source>
        <strain>cv. Columbia</strain>
    </source>
</reference>
<reference key="4">
    <citation type="journal article" date="2003" name="Science">
        <title>Empirical analysis of transcriptional activity in the Arabidopsis genome.</title>
        <authorList>
            <person name="Yamada K."/>
            <person name="Lim J."/>
            <person name="Dale J.M."/>
            <person name="Chen H."/>
            <person name="Shinn P."/>
            <person name="Palm C.J."/>
            <person name="Southwick A.M."/>
            <person name="Wu H.C."/>
            <person name="Kim C.J."/>
            <person name="Nguyen M."/>
            <person name="Pham P.K."/>
            <person name="Cheuk R.F."/>
            <person name="Karlin-Newmann G."/>
            <person name="Liu S.X."/>
            <person name="Lam B."/>
            <person name="Sakano H."/>
            <person name="Wu T."/>
            <person name="Yu G."/>
            <person name="Miranda M."/>
            <person name="Quach H.L."/>
            <person name="Tripp M."/>
            <person name="Chang C.H."/>
            <person name="Lee J.M."/>
            <person name="Toriumi M.J."/>
            <person name="Chan M.M."/>
            <person name="Tang C.C."/>
            <person name="Onodera C.S."/>
            <person name="Deng J.M."/>
            <person name="Akiyama K."/>
            <person name="Ansari Y."/>
            <person name="Arakawa T."/>
            <person name="Banh J."/>
            <person name="Banno F."/>
            <person name="Bowser L."/>
            <person name="Brooks S.Y."/>
            <person name="Carninci P."/>
            <person name="Chao Q."/>
            <person name="Choy N."/>
            <person name="Enju A."/>
            <person name="Goldsmith A.D."/>
            <person name="Gurjal M."/>
            <person name="Hansen N.F."/>
            <person name="Hayashizaki Y."/>
            <person name="Johnson-Hopson C."/>
            <person name="Hsuan V.W."/>
            <person name="Iida K."/>
            <person name="Karnes M."/>
            <person name="Khan S."/>
            <person name="Koesema E."/>
            <person name="Ishida J."/>
            <person name="Jiang P.X."/>
            <person name="Jones T."/>
            <person name="Kawai J."/>
            <person name="Kamiya A."/>
            <person name="Meyers C."/>
            <person name="Nakajima M."/>
            <person name="Narusaka M."/>
            <person name="Seki M."/>
            <person name="Sakurai T."/>
            <person name="Satou M."/>
            <person name="Tamse R."/>
            <person name="Vaysberg M."/>
            <person name="Wallender E.K."/>
            <person name="Wong C."/>
            <person name="Yamamura Y."/>
            <person name="Yuan S."/>
            <person name="Shinozaki K."/>
            <person name="Davis R.W."/>
            <person name="Theologis A."/>
            <person name="Ecker J.R."/>
        </authorList>
    </citation>
    <scope>NUCLEOTIDE SEQUENCE [LARGE SCALE MRNA]</scope>
    <source>
        <strain>cv. Columbia</strain>
    </source>
</reference>
<reference key="5">
    <citation type="submission" date="2005-05" db="EMBL/GenBank/DDBJ databases">
        <title>Arabidopsis ORF clones.</title>
        <authorList>
            <person name="Kim C.J."/>
            <person name="Chen H."/>
            <person name="Cheuk R."/>
            <person name="Shinn P."/>
            <person name="Ecker J.R."/>
        </authorList>
    </citation>
    <scope>NUCLEOTIDE SEQUENCE [LARGE SCALE MRNA]</scope>
</reference>
<reference key="6">
    <citation type="journal article" date="2000" name="Eur. J. Biochem.">
        <title>A novel NADPH:diamide oxidoreductase activity in arabidopsis thaliana P1 zeta-crystallin.</title>
        <authorList>
            <person name="Mano J."/>
            <person name="Babiychuk E."/>
            <person name="Belles-Boix E."/>
            <person name="Hiratake J."/>
            <person name="Kimura A."/>
            <person name="Inze D."/>
            <person name="Kushnir S."/>
            <person name="Asada K."/>
        </authorList>
    </citation>
    <scope>FUNCTION</scope>
    <scope>SUBUNIT</scope>
    <scope>CATALYTIC ACTIVITY</scope>
    <scope>BIOPHYSICOCHEMICAL PROPERTIES</scope>
    <scope>ACTIVITY REGULATION</scope>
</reference>
<reference key="7">
    <citation type="journal article" date="2002" name="Plant Cell Physiol.">
        <title>The NADPH:quinone oxidoreductase P1-zeta-crystallin in Arabidopsis catalyzes the alpha,beta-hydrogenation of 2-alkenals: detoxication of the lipid peroxide-derived reactive aldehydes.</title>
        <authorList>
            <person name="Mano J."/>
            <person name="Torii Y."/>
            <person name="Hayashi S."/>
            <person name="Takimoto K."/>
            <person name="Matsui K."/>
            <person name="Nakamura K."/>
            <person name="Inze D."/>
            <person name="Babiychuk E."/>
            <person name="Kushnir S."/>
            <person name="Asada K."/>
        </authorList>
    </citation>
    <scope>FUNCTION</scope>
    <scope>CATALYTIC ACTIVITY</scope>
    <scope>SUBSTRATE SPECIFICITY</scope>
    <scope>BIOPHYSICOCHEMICAL PROPERTIES</scope>
</reference>
<reference key="8">
    <citation type="journal article" date="2005" name="Plant Physiol.">
        <title>Protection against photooxidative injury of tobacco leaves by 2-alkenal reductase. Detoxication of lipid peroxide-derived reactive carbonyls.</title>
        <authorList>
            <person name="Mano J."/>
            <person name="Belles-Boix E."/>
            <person name="Babiychuk E."/>
            <person name="Inze D."/>
            <person name="Torii Y."/>
            <person name="Hiraoka E."/>
            <person name="Takimoto K."/>
            <person name="Slooten L."/>
            <person name="Asada K."/>
            <person name="Kushnir S."/>
        </authorList>
    </citation>
    <scope>FUNCTION</scope>
    <scope>CATALYTIC ACTIVITY</scope>
    <scope>SUBCELLULAR LOCATION</scope>
    <scope>BIOPHYSICOCHEMICAL PROPERTIES</scope>
    <scope>TISSUE SPECIFICITY</scope>
</reference>
<reference key="9">
    <citation type="journal article" date="2016" name="Phytochemistry">
        <title>The chloroplast membrane associated ceQORH putative quinone oxidoreductase reduces long-chain, stress-related oxidized lipids.</title>
        <authorList>
            <person name="Curien G."/>
            <person name="Giustini C."/>
            <person name="Montillet J.L."/>
            <person name="Mas-Y-Mas S."/>
            <person name="Cobessi D."/>
            <person name="Ferrer J.L."/>
            <person name="Matringe M."/>
            <person name="Grechkin A."/>
            <person name="Rolland N."/>
        </authorList>
    </citation>
    <scope>CATALYTIC ACTIVITY</scope>
    <scope>SUBSTRATE SPECIFICITY</scope>
    <scope>BIOPHYSICOCHEMICAL PROPERTIES</scope>
</reference>
<reference key="10">
    <citation type="journal article" date="2006" name="J. Biol. Chem.">
        <title>Mechanistic and structural studies of apoform, binary, and ternary complexes of the Arabidopsis alkenal double bond reductase At5g16970.</title>
        <authorList>
            <person name="Youn B."/>
            <person name="Kim S.J."/>
            <person name="Moinuddin S.G."/>
            <person name="Lee C."/>
            <person name="Bedgar D.L."/>
            <person name="Harper A.R."/>
            <person name="Davin L.B."/>
            <person name="Lewis N.G."/>
            <person name="Kang C."/>
        </authorList>
    </citation>
    <scope>X-RAY CRYSTALLOGRAPHY (2.5 ANGSTROMS) IN COMPLEXES WITH SUBSTRATES AND NADP</scope>
    <scope>CATALYTIC ACTIVITY</scope>
    <scope>FUNCTION</scope>
    <scope>BIOPHYSICOCHEMICAL PROPERTIES</scope>
    <scope>SUBUNIT</scope>
</reference>
<sequence length="345" mass="38134">MTATNKQVILKDYVSGFPTESDFDFTTTTVELRVPEGTNSVLVKNLYLSCDPYMRIRMGKPDPSTAALAQAYTPGQPIQGYGVSRIIESGHPDYKKGDLLWGIVAWEEYSVITPMTHAHFKIQHTDVPLSYYTGLLGMPGMTAYAGFYEVCSPKEGETVYVSAASGAVGQLVGQLAKMMGCYVVGSAGSKEKVDLLKTKFGFDDAFNYKEESDLTAALKRCFPNGIDIYFENVGGKMLDAVLVNMNMHGRIAVCGMISQYNLENQEGVHNLSNIIYKRIRIQGFVVSDFYDKYSKFLEFVLPHIREGKITYVEDVADGLEKAPEALVGLFHGKNVGKQVVVVARE</sequence>
<keyword id="KW-0002">3D-structure</keyword>
<keyword id="KW-0963">Cytoplasm</keyword>
<keyword id="KW-0521">NADP</keyword>
<keyword id="KW-0539">Nucleus</keyword>
<keyword id="KW-0560">Oxidoreductase</keyword>
<keyword id="KW-1185">Reference proteome</keyword>
<accession>Q39172</accession>
<accession>Q501A9</accession>
<accession>Q8L865</accession>
<feature type="chain" id="PRO_0000218073" description="NADPH-dependent oxidoreductase 2-alkenal reductase">
    <location>
        <begin position="1"/>
        <end position="345"/>
    </location>
</feature>
<feature type="binding site" evidence="15">
    <location>
        <begin position="52"/>
        <end position="53"/>
    </location>
    <ligand>
        <name>NADP(+)</name>
        <dbReference type="ChEBI" id="CHEBI:58349"/>
    </ligand>
</feature>
<feature type="binding site" evidence="17">
    <location>
        <position position="53"/>
    </location>
    <ligand>
        <name>substrate</name>
    </ligand>
</feature>
<feature type="binding site" evidence="15 16 17">
    <location>
        <begin position="163"/>
        <end position="169"/>
    </location>
    <ligand>
        <name>NADP(+)</name>
        <dbReference type="ChEBI" id="CHEBI:58349"/>
    </ligand>
</feature>
<feature type="binding site" evidence="15 16 17">
    <location>
        <position position="188"/>
    </location>
    <ligand>
        <name>NADP(+)</name>
        <dbReference type="ChEBI" id="CHEBI:58349"/>
    </ligand>
</feature>
<feature type="binding site" evidence="15 16 17">
    <location>
        <position position="192"/>
    </location>
    <ligand>
        <name>NADP(+)</name>
        <dbReference type="ChEBI" id="CHEBI:58349"/>
    </ligand>
</feature>
<feature type="binding site" evidence="15 16 17">
    <location>
        <position position="208"/>
    </location>
    <ligand>
        <name>NADP(+)</name>
        <dbReference type="ChEBI" id="CHEBI:58349"/>
    </ligand>
</feature>
<feature type="binding site" evidence="16">
    <location>
        <position position="232"/>
    </location>
    <ligand>
        <name>NADP(+)</name>
        <dbReference type="ChEBI" id="CHEBI:58349"/>
    </ligand>
</feature>
<feature type="binding site" evidence="15 16 17">
    <location>
        <position position="254"/>
    </location>
    <ligand>
        <name>NADP(+)</name>
        <dbReference type="ChEBI" id="CHEBI:58349"/>
    </ligand>
</feature>
<feature type="binding site" evidence="15 16 17">
    <location>
        <position position="260"/>
    </location>
    <ligand>
        <name>NADP(+)</name>
        <dbReference type="ChEBI" id="CHEBI:58349"/>
    </ligand>
</feature>
<feature type="binding site" evidence="17">
    <location>
        <position position="260"/>
    </location>
    <ligand>
        <name>substrate</name>
    </ligand>
</feature>
<feature type="binding site" evidence="15 16 17">
    <location>
        <begin position="284"/>
        <end position="286"/>
    </location>
    <ligand>
        <name>NADP(+)</name>
        <dbReference type="ChEBI" id="CHEBI:58349"/>
    </ligand>
</feature>
<feature type="binding site" evidence="16 17">
    <location>
        <position position="330"/>
    </location>
    <ligand>
        <name>NADP(+)</name>
        <dbReference type="ChEBI" id="CHEBI:58349"/>
    </ligand>
</feature>
<feature type="binding site" evidence="15 16 17">
    <location>
        <begin position="334"/>
        <end position="336"/>
    </location>
    <ligand>
        <name>NADP(+)</name>
        <dbReference type="ChEBI" id="CHEBI:58349"/>
    </ligand>
</feature>
<feature type="sequence conflict" description="In Ref. 4; AAM53276." evidence="12" ref="4">
    <original>P</original>
    <variation>T</variation>
    <location>
        <position position="223"/>
    </location>
</feature>
<feature type="strand" evidence="18">
    <location>
        <begin position="2"/>
        <end position="10"/>
    </location>
</feature>
<feature type="strand" evidence="18">
    <location>
        <begin position="14"/>
        <end position="17"/>
    </location>
</feature>
<feature type="helix" evidence="18">
    <location>
        <begin position="20"/>
        <end position="22"/>
    </location>
</feature>
<feature type="strand" evidence="18">
    <location>
        <begin position="23"/>
        <end position="31"/>
    </location>
</feature>
<feature type="strand" evidence="18">
    <location>
        <begin position="36"/>
        <end position="39"/>
    </location>
</feature>
<feature type="strand" evidence="18">
    <location>
        <begin position="41"/>
        <end position="45"/>
    </location>
</feature>
<feature type="strand" evidence="18">
    <location>
        <begin position="47"/>
        <end position="49"/>
    </location>
</feature>
<feature type="helix" evidence="18">
    <location>
        <begin position="54"/>
        <end position="58"/>
    </location>
</feature>
<feature type="turn" evidence="18">
    <location>
        <begin position="63"/>
        <end position="68"/>
    </location>
</feature>
<feature type="strand" evidence="18">
    <location>
        <begin position="79"/>
        <end position="89"/>
    </location>
</feature>
<feature type="strand" evidence="20">
    <location>
        <begin position="91"/>
        <end position="93"/>
    </location>
</feature>
<feature type="strand" evidence="18">
    <location>
        <begin position="99"/>
        <end position="112"/>
    </location>
</feature>
<feature type="turn" evidence="18">
    <location>
        <begin position="116"/>
        <end position="118"/>
    </location>
</feature>
<feature type="strand" evidence="18">
    <location>
        <begin position="120"/>
        <end position="122"/>
    </location>
</feature>
<feature type="helix" evidence="18">
    <location>
        <begin position="131"/>
        <end position="133"/>
    </location>
</feature>
<feature type="turn" evidence="18">
    <location>
        <begin position="134"/>
        <end position="136"/>
    </location>
</feature>
<feature type="helix" evidence="18">
    <location>
        <begin position="138"/>
        <end position="148"/>
    </location>
</feature>
<feature type="turn" evidence="19">
    <location>
        <begin position="149"/>
        <end position="151"/>
    </location>
</feature>
<feature type="strand" evidence="18">
    <location>
        <begin position="158"/>
        <end position="163"/>
    </location>
</feature>
<feature type="helix" evidence="18">
    <location>
        <begin position="167"/>
        <end position="178"/>
    </location>
</feature>
<feature type="strand" evidence="18">
    <location>
        <begin position="182"/>
        <end position="189"/>
    </location>
</feature>
<feature type="helix" evidence="18">
    <location>
        <begin position="190"/>
        <end position="198"/>
    </location>
</feature>
<feature type="strand" evidence="18">
    <location>
        <begin position="203"/>
        <end position="207"/>
    </location>
</feature>
<feature type="helix" evidence="19">
    <location>
        <begin position="208"/>
        <end position="210"/>
    </location>
</feature>
<feature type="helix" evidence="18">
    <location>
        <begin position="215"/>
        <end position="221"/>
    </location>
</feature>
<feature type="strand" evidence="18">
    <location>
        <begin position="226"/>
        <end position="233"/>
    </location>
</feature>
<feature type="helix" evidence="18">
    <location>
        <begin position="235"/>
        <end position="242"/>
    </location>
</feature>
<feature type="strand" evidence="18">
    <location>
        <begin position="245"/>
        <end position="253"/>
    </location>
</feature>
<feature type="helix" evidence="18">
    <location>
        <begin position="257"/>
        <end position="259"/>
    </location>
</feature>
<feature type="helix" evidence="18">
    <location>
        <begin position="273"/>
        <end position="277"/>
    </location>
</feature>
<feature type="strand" evidence="18">
    <location>
        <begin position="280"/>
        <end position="283"/>
    </location>
</feature>
<feature type="helix" evidence="18">
    <location>
        <begin position="286"/>
        <end position="292"/>
    </location>
</feature>
<feature type="helix" evidence="18">
    <location>
        <begin position="293"/>
        <end position="305"/>
    </location>
</feature>
<feature type="strand" evidence="18">
    <location>
        <begin position="313"/>
        <end position="318"/>
    </location>
</feature>
<feature type="helix" evidence="18">
    <location>
        <begin position="319"/>
        <end position="321"/>
    </location>
</feature>
<feature type="helix" evidence="18">
    <location>
        <begin position="323"/>
        <end position="330"/>
    </location>
</feature>
<feature type="strand" evidence="18">
    <location>
        <begin position="335"/>
        <end position="343"/>
    </location>
</feature>
<evidence type="ECO:0000269" key="1">
    <source>
    </source>
</evidence>
<evidence type="ECO:0000269" key="2">
    <source>
    </source>
</evidence>
<evidence type="ECO:0000269" key="3">
    <source>
    </source>
</evidence>
<evidence type="ECO:0000269" key="4">
    <source>
    </source>
</evidence>
<evidence type="ECO:0000269" key="5">
    <source>
    </source>
</evidence>
<evidence type="ECO:0000269" key="6">
    <source>
    </source>
</evidence>
<evidence type="ECO:0000303" key="7">
    <source>
    </source>
</evidence>
<evidence type="ECO:0000303" key="8">
    <source>
    </source>
</evidence>
<evidence type="ECO:0000303" key="9">
    <source>
    </source>
</evidence>
<evidence type="ECO:0000303" key="10">
    <source>
    </source>
</evidence>
<evidence type="ECO:0000303" key="11">
    <source>
    </source>
</evidence>
<evidence type="ECO:0000305" key="12"/>
<evidence type="ECO:0000312" key="13">
    <source>
        <dbReference type="Araport" id="AT5G16970"/>
    </source>
</evidence>
<evidence type="ECO:0000312" key="14">
    <source>
        <dbReference type="EMBL" id="CAC01710.1"/>
    </source>
</evidence>
<evidence type="ECO:0007744" key="15">
    <source>
        <dbReference type="PDB" id="2J3I"/>
    </source>
</evidence>
<evidence type="ECO:0007744" key="16">
    <source>
        <dbReference type="PDB" id="2J3J"/>
    </source>
</evidence>
<evidence type="ECO:0007744" key="17">
    <source>
        <dbReference type="PDB" id="2J3K"/>
    </source>
</evidence>
<evidence type="ECO:0007829" key="18">
    <source>
        <dbReference type="PDB" id="2J3H"/>
    </source>
</evidence>
<evidence type="ECO:0007829" key="19">
    <source>
        <dbReference type="PDB" id="2J3I"/>
    </source>
</evidence>
<evidence type="ECO:0007829" key="20">
    <source>
        <dbReference type="PDB" id="2J3J"/>
    </source>
</evidence>
<dbReference type="EC" id="1.3.1.-" evidence="1"/>
<dbReference type="EC" id="1.3.1.74" evidence="2 3 4 5"/>
<dbReference type="EMBL" id="Z49768">
    <property type="protein sequence ID" value="CAA89838.1"/>
    <property type="molecule type" value="mRNA"/>
</dbReference>
<dbReference type="EMBL" id="AL391141">
    <property type="protein sequence ID" value="CAC01710.1"/>
    <property type="molecule type" value="Genomic_DNA"/>
</dbReference>
<dbReference type="EMBL" id="CP002688">
    <property type="protein sequence ID" value="AED92364.1"/>
    <property type="molecule type" value="Genomic_DNA"/>
</dbReference>
<dbReference type="EMBL" id="AY120718">
    <property type="protein sequence ID" value="AAM53276.1"/>
    <property type="molecule type" value="mRNA"/>
</dbReference>
<dbReference type="EMBL" id="BT022058">
    <property type="protein sequence ID" value="AAY25470.1"/>
    <property type="molecule type" value="mRNA"/>
</dbReference>
<dbReference type="PIR" id="S57611">
    <property type="entry name" value="S57611"/>
</dbReference>
<dbReference type="RefSeq" id="NP_197199.1">
    <property type="nucleotide sequence ID" value="NM_121703.4"/>
</dbReference>
<dbReference type="PDB" id="2J3H">
    <property type="method" value="X-ray"/>
    <property type="resolution" value="2.50 A"/>
    <property type="chains" value="A/B=1-345"/>
</dbReference>
<dbReference type="PDB" id="2J3I">
    <property type="method" value="X-ray"/>
    <property type="resolution" value="2.80 A"/>
    <property type="chains" value="A/B=1-345"/>
</dbReference>
<dbReference type="PDB" id="2J3J">
    <property type="method" value="X-ray"/>
    <property type="resolution" value="2.80 A"/>
    <property type="chains" value="A/B=1-345"/>
</dbReference>
<dbReference type="PDB" id="2J3K">
    <property type="method" value="X-ray"/>
    <property type="resolution" value="2.80 A"/>
    <property type="chains" value="A/B=1-345"/>
</dbReference>
<dbReference type="PDBsum" id="2J3H"/>
<dbReference type="PDBsum" id="2J3I"/>
<dbReference type="PDBsum" id="2J3J"/>
<dbReference type="PDBsum" id="2J3K"/>
<dbReference type="SMR" id="Q39172"/>
<dbReference type="BioGRID" id="16836">
    <property type="interactions" value="2"/>
</dbReference>
<dbReference type="FunCoup" id="Q39172">
    <property type="interactions" value="1640"/>
</dbReference>
<dbReference type="IntAct" id="Q39172">
    <property type="interactions" value="1"/>
</dbReference>
<dbReference type="STRING" id="3702.Q39172"/>
<dbReference type="iPTMnet" id="Q39172"/>
<dbReference type="PaxDb" id="3702-AT5G16970.1"/>
<dbReference type="ProteomicsDB" id="244727"/>
<dbReference type="DNASU" id="831560"/>
<dbReference type="EnsemblPlants" id="AT5G16970.1">
    <property type="protein sequence ID" value="AT5G16970.1"/>
    <property type="gene ID" value="AT5G16970"/>
</dbReference>
<dbReference type="GeneID" id="831560"/>
<dbReference type="Gramene" id="AT5G16970.1">
    <property type="protein sequence ID" value="AT5G16970.1"/>
    <property type="gene ID" value="AT5G16970"/>
</dbReference>
<dbReference type="KEGG" id="ath:AT5G16970"/>
<dbReference type="Araport" id="AT5G16970"/>
<dbReference type="TAIR" id="AT5G16970">
    <property type="gene designation" value="AER"/>
</dbReference>
<dbReference type="eggNOG" id="KOG1196">
    <property type="taxonomic scope" value="Eukaryota"/>
</dbReference>
<dbReference type="HOGENOM" id="CLU_026673_29_1_1"/>
<dbReference type="InParanoid" id="Q39172"/>
<dbReference type="OMA" id="WMSDIPQ"/>
<dbReference type="PhylomeDB" id="Q39172"/>
<dbReference type="BioCyc" id="ARA:AT5G16970-MONOMER"/>
<dbReference type="BioCyc" id="MetaCyc:AT5G16970-MONOMER"/>
<dbReference type="SABIO-RK" id="Q39172"/>
<dbReference type="CD-CODE" id="4299E36E">
    <property type="entry name" value="Nucleolus"/>
</dbReference>
<dbReference type="EvolutionaryTrace" id="Q39172"/>
<dbReference type="PRO" id="PR:Q39172"/>
<dbReference type="Proteomes" id="UP000006548">
    <property type="component" value="Chromosome 5"/>
</dbReference>
<dbReference type="ExpressionAtlas" id="Q39172">
    <property type="expression patterns" value="baseline and differential"/>
</dbReference>
<dbReference type="GO" id="GO:0005829">
    <property type="term" value="C:cytosol"/>
    <property type="evidence" value="ECO:0000314"/>
    <property type="project" value="TAIR"/>
</dbReference>
<dbReference type="GO" id="GO:0005654">
    <property type="term" value="C:nucleoplasm"/>
    <property type="evidence" value="ECO:0007669"/>
    <property type="project" value="UniProtKB-SubCell"/>
</dbReference>
<dbReference type="GO" id="GO:0005634">
    <property type="term" value="C:nucleus"/>
    <property type="evidence" value="ECO:0000314"/>
    <property type="project" value="TAIR"/>
</dbReference>
<dbReference type="GO" id="GO:0009536">
    <property type="term" value="C:plastid"/>
    <property type="evidence" value="ECO:0007005"/>
    <property type="project" value="TAIR"/>
</dbReference>
<dbReference type="GO" id="GO:0035798">
    <property type="term" value="F:2-alkenal reductase (NADPH) activity"/>
    <property type="evidence" value="ECO:0007669"/>
    <property type="project" value="RHEA"/>
</dbReference>
<dbReference type="GO" id="GO:0032440">
    <property type="term" value="F:2-alkenal reductase [NAD(P)+] activity"/>
    <property type="evidence" value="ECO:0000314"/>
    <property type="project" value="TAIR"/>
</dbReference>
<dbReference type="GO" id="GO:0006979">
    <property type="term" value="P:response to oxidative stress"/>
    <property type="evidence" value="ECO:0000315"/>
    <property type="project" value="TAIR"/>
</dbReference>
<dbReference type="CDD" id="cd08295">
    <property type="entry name" value="double_bond_reductase_like"/>
    <property type="match status" value="1"/>
</dbReference>
<dbReference type="FunFam" id="3.90.180.10:FF:000049">
    <property type="entry name" value="NADPH-dependent oxidoreductase 2-alkenal reductase"/>
    <property type="match status" value="1"/>
</dbReference>
<dbReference type="FunFam" id="3.40.50.720:FF:000121">
    <property type="entry name" value="Prostaglandin reductase 2"/>
    <property type="match status" value="1"/>
</dbReference>
<dbReference type="Gene3D" id="3.90.180.10">
    <property type="entry name" value="Medium-chain alcohol dehydrogenases, catalytic domain"/>
    <property type="match status" value="1"/>
</dbReference>
<dbReference type="Gene3D" id="3.40.50.720">
    <property type="entry name" value="NAD(P)-binding Rossmann-like Domain"/>
    <property type="match status" value="1"/>
</dbReference>
<dbReference type="InterPro" id="IPR013149">
    <property type="entry name" value="ADH-like_C"/>
</dbReference>
<dbReference type="InterPro" id="IPR041694">
    <property type="entry name" value="ADH_N_2"/>
</dbReference>
<dbReference type="InterPro" id="IPR011032">
    <property type="entry name" value="GroES-like_sf"/>
</dbReference>
<dbReference type="InterPro" id="IPR045010">
    <property type="entry name" value="MDR_fam"/>
</dbReference>
<dbReference type="InterPro" id="IPR036291">
    <property type="entry name" value="NAD(P)-bd_dom_sf"/>
</dbReference>
<dbReference type="InterPro" id="IPR020843">
    <property type="entry name" value="PKS_ER"/>
</dbReference>
<dbReference type="PANTHER" id="PTHR43205:SF30">
    <property type="entry name" value="NADP-DEPENDENT ALKENAL DOUBLE BOND REDUCTASE P2-RELATED"/>
    <property type="match status" value="1"/>
</dbReference>
<dbReference type="PANTHER" id="PTHR43205">
    <property type="entry name" value="PROSTAGLANDIN REDUCTASE"/>
    <property type="match status" value="1"/>
</dbReference>
<dbReference type="Pfam" id="PF16884">
    <property type="entry name" value="ADH_N_2"/>
    <property type="match status" value="1"/>
</dbReference>
<dbReference type="Pfam" id="PF00107">
    <property type="entry name" value="ADH_zinc_N"/>
    <property type="match status" value="1"/>
</dbReference>
<dbReference type="SMART" id="SM00829">
    <property type="entry name" value="PKS_ER"/>
    <property type="match status" value="1"/>
</dbReference>
<dbReference type="SUPFAM" id="SSF50129">
    <property type="entry name" value="GroES-like"/>
    <property type="match status" value="2"/>
</dbReference>
<dbReference type="SUPFAM" id="SSF51735">
    <property type="entry name" value="NAD(P)-binding Rossmann-fold domains"/>
    <property type="match status" value="1"/>
</dbReference>
<protein>
    <recommendedName>
        <fullName evidence="9">NADPH-dependent oxidoreductase 2-alkenal reductase</fullName>
        <shortName evidence="9">AtAER</shortName>
        <ecNumber evidence="1">1.3.1.-</ecNumber>
        <ecNumber evidence="2 3 4 5">1.3.1.74</ecNumber>
    </recommendedName>
    <alternativeName>
        <fullName evidence="10">NADP-dependent alkenal double bond reductase P1</fullName>
        <shortName evidence="10">DBR1</shortName>
    </alternativeName>
    <alternativeName>
        <fullName evidence="7">NADPH-azodicarbonyl/quinone reductase</fullName>
    </alternativeName>
    <alternativeName>
        <fullName evidence="8">NADPH:2-alkenal/one alpha,beta-hydrogenase</fullName>
        <shortName evidence="8">ALH</shortName>
    </alternativeName>
    <alternativeName>
        <fullName evidence="11">P1-zeta-crystallin protein</fullName>
        <shortName evidence="11">P1-ZCr</shortName>
    </alternativeName>
</protein>
<proteinExistence type="evidence at protein level"/>
<name>AER_ARATH</name>
<gene>
    <name evidence="9" type="primary">AER</name>
    <name evidence="11" type="synonym">P1</name>
    <name evidence="13" type="ordered locus">At5g16970</name>
    <name evidence="14" type="ORF">F2K13_120</name>
</gene>